<reference key="1">
    <citation type="journal article" date="2005" name="Nature">
        <title>Generation and annotation of the DNA sequences of human chromosomes 2 and 4.</title>
        <authorList>
            <person name="Hillier L.W."/>
            <person name="Graves T.A."/>
            <person name="Fulton R.S."/>
            <person name="Fulton L.A."/>
            <person name="Pepin K.H."/>
            <person name="Minx P."/>
            <person name="Wagner-McPherson C."/>
            <person name="Layman D."/>
            <person name="Wylie K."/>
            <person name="Sekhon M."/>
            <person name="Becker M.C."/>
            <person name="Fewell G.A."/>
            <person name="Delehaunty K.D."/>
            <person name="Miner T.L."/>
            <person name="Nash W.E."/>
            <person name="Kremitzki C."/>
            <person name="Oddy L."/>
            <person name="Du H."/>
            <person name="Sun H."/>
            <person name="Bradshaw-Cordum H."/>
            <person name="Ali J."/>
            <person name="Carter J."/>
            <person name="Cordes M."/>
            <person name="Harris A."/>
            <person name="Isak A."/>
            <person name="van Brunt A."/>
            <person name="Nguyen C."/>
            <person name="Du F."/>
            <person name="Courtney L."/>
            <person name="Kalicki J."/>
            <person name="Ozersky P."/>
            <person name="Abbott S."/>
            <person name="Armstrong J."/>
            <person name="Belter E.A."/>
            <person name="Caruso L."/>
            <person name="Cedroni M."/>
            <person name="Cotton M."/>
            <person name="Davidson T."/>
            <person name="Desai A."/>
            <person name="Elliott G."/>
            <person name="Erb T."/>
            <person name="Fronick C."/>
            <person name="Gaige T."/>
            <person name="Haakenson W."/>
            <person name="Haglund K."/>
            <person name="Holmes A."/>
            <person name="Harkins R."/>
            <person name="Kim K."/>
            <person name="Kruchowski S.S."/>
            <person name="Strong C.M."/>
            <person name="Grewal N."/>
            <person name="Goyea E."/>
            <person name="Hou S."/>
            <person name="Levy A."/>
            <person name="Martinka S."/>
            <person name="Mead K."/>
            <person name="McLellan M.D."/>
            <person name="Meyer R."/>
            <person name="Randall-Maher J."/>
            <person name="Tomlinson C."/>
            <person name="Dauphin-Kohlberg S."/>
            <person name="Kozlowicz-Reilly A."/>
            <person name="Shah N."/>
            <person name="Swearengen-Shahid S."/>
            <person name="Snider J."/>
            <person name="Strong J.T."/>
            <person name="Thompson J."/>
            <person name="Yoakum M."/>
            <person name="Leonard S."/>
            <person name="Pearman C."/>
            <person name="Trani L."/>
            <person name="Radionenko M."/>
            <person name="Waligorski J.E."/>
            <person name="Wang C."/>
            <person name="Rock S.M."/>
            <person name="Tin-Wollam A.-M."/>
            <person name="Maupin R."/>
            <person name="Latreille P."/>
            <person name="Wendl M.C."/>
            <person name="Yang S.-P."/>
            <person name="Pohl C."/>
            <person name="Wallis J.W."/>
            <person name="Spieth J."/>
            <person name="Bieri T.A."/>
            <person name="Berkowicz N."/>
            <person name="Nelson J.O."/>
            <person name="Osborne J."/>
            <person name="Ding L."/>
            <person name="Meyer R."/>
            <person name="Sabo A."/>
            <person name="Shotland Y."/>
            <person name="Sinha P."/>
            <person name="Wohldmann P.E."/>
            <person name="Cook L.L."/>
            <person name="Hickenbotham M.T."/>
            <person name="Eldred J."/>
            <person name="Williams D."/>
            <person name="Jones T.A."/>
            <person name="She X."/>
            <person name="Ciccarelli F.D."/>
            <person name="Izaurralde E."/>
            <person name="Taylor J."/>
            <person name="Schmutz J."/>
            <person name="Myers R.M."/>
            <person name="Cox D.R."/>
            <person name="Huang X."/>
            <person name="McPherson J.D."/>
            <person name="Mardis E.R."/>
            <person name="Clifton S.W."/>
            <person name="Warren W.C."/>
            <person name="Chinwalla A.T."/>
            <person name="Eddy S.R."/>
            <person name="Marra M.A."/>
            <person name="Ovcharenko I."/>
            <person name="Furey T.S."/>
            <person name="Miller W."/>
            <person name="Eichler E.E."/>
            <person name="Bork P."/>
            <person name="Suyama M."/>
            <person name="Torrents D."/>
            <person name="Waterston R.H."/>
            <person name="Wilson R.K."/>
        </authorList>
    </citation>
    <scope>NUCLEOTIDE SEQUENCE [LARGE SCALE GENOMIC DNA]</scope>
</reference>
<reference key="2">
    <citation type="journal article" date="2004" name="Gene">
        <title>Five POTE paralogs and their splice variants are expressed in human prostate and encode proteins of different lengths.</title>
        <authorList>
            <person name="Bera T.K."/>
            <person name="Huynh N."/>
            <person name="Maeda H."/>
            <person name="Sathyanarayana B.K."/>
            <person name="Lee B."/>
            <person name="Pastan I."/>
        </authorList>
    </citation>
    <scope>NUCLEOTIDE SEQUENCE [MRNA] OF 1-712 (ISOFORMS 1; 2 AND 3)</scope>
    <source>
        <tissue>Prostate</tissue>
    </source>
</reference>
<accession>Q6S8J3</accession>
<accession>Q6S8J4</accession>
<accession>Q6S8J5</accession>
<accession>Q6S8J8</accession>
<evidence type="ECO:0000255" key="1"/>
<evidence type="ECO:0000256" key="2">
    <source>
        <dbReference type="SAM" id="MobiDB-lite"/>
    </source>
</evidence>
<evidence type="ECO:0000303" key="3">
    <source>
    </source>
</evidence>
<evidence type="ECO:0000305" key="4"/>
<name>POTEE_HUMAN</name>
<dbReference type="EMBL" id="AC131180">
    <property type="status" value="NOT_ANNOTATED_CDS"/>
    <property type="molecule type" value="Genomic_DNA"/>
</dbReference>
<dbReference type="EMBL" id="AY462868">
    <property type="protein sequence ID" value="AAS58862.1"/>
    <property type="molecule type" value="mRNA"/>
</dbReference>
<dbReference type="EMBL" id="AY462871">
    <property type="protein sequence ID" value="AAS58865.1"/>
    <property type="molecule type" value="mRNA"/>
</dbReference>
<dbReference type="EMBL" id="AY462872">
    <property type="protein sequence ID" value="AAS58866.1"/>
    <property type="molecule type" value="mRNA"/>
</dbReference>
<dbReference type="EMBL" id="AY462873">
    <property type="protein sequence ID" value="AAS58867.1"/>
    <property type="molecule type" value="mRNA"/>
</dbReference>
<dbReference type="CCDS" id="CCDS46414.1">
    <molecule id="Q6S8J3-1"/>
</dbReference>
<dbReference type="RefSeq" id="NP_001077007.1">
    <molecule id="Q6S8J3-1"/>
    <property type="nucleotide sequence ID" value="NM_001083538.3"/>
</dbReference>
<dbReference type="RefSeq" id="XP_016859650.1">
    <property type="nucleotide sequence ID" value="XM_017004161.1"/>
</dbReference>
<dbReference type="RefSeq" id="XP_047300377.1">
    <molecule id="Q6S8J3-1"/>
    <property type="nucleotide sequence ID" value="XM_047444421.1"/>
</dbReference>
<dbReference type="SMR" id="Q6S8J3"/>
<dbReference type="BioGRID" id="138656">
    <property type="interactions" value="154"/>
</dbReference>
<dbReference type="FunCoup" id="Q6S8J3">
    <property type="interactions" value="291"/>
</dbReference>
<dbReference type="IntAct" id="Q6S8J3">
    <property type="interactions" value="73"/>
</dbReference>
<dbReference type="MINT" id="Q6S8J3"/>
<dbReference type="STRING" id="9606.ENSP00000439189"/>
<dbReference type="GlyCosmos" id="Q6S8J3">
    <property type="glycosylation" value="2 sites, 1 glycan"/>
</dbReference>
<dbReference type="GlyGen" id="Q6S8J3">
    <property type="glycosylation" value="3 sites, 1 N-linked glycan (1 site), 1 O-linked glycan (2 sites)"/>
</dbReference>
<dbReference type="iPTMnet" id="Q6S8J3"/>
<dbReference type="MetOSite" id="Q6S8J3"/>
<dbReference type="PhosphoSitePlus" id="Q6S8J3"/>
<dbReference type="SwissPalm" id="Q6S8J3"/>
<dbReference type="BioMuta" id="POTEE"/>
<dbReference type="DMDM" id="166898073"/>
<dbReference type="jPOST" id="Q6S8J3"/>
<dbReference type="MassIVE" id="Q6S8J3"/>
<dbReference type="PaxDb" id="9606-ENSP00000439189"/>
<dbReference type="PeptideAtlas" id="Q6S8J3"/>
<dbReference type="PRIDE" id="Q6S8J3"/>
<dbReference type="Pumba" id="Q6S8J3"/>
<dbReference type="TopDownProteomics" id="Q6S8J3-1">
    <molecule id="Q6S8J3-1"/>
</dbReference>
<dbReference type="Antibodypedia" id="56140">
    <property type="antibodies" value="68 antibodies from 16 providers"/>
</dbReference>
<dbReference type="DNASU" id="445582"/>
<dbReference type="Ensembl" id="ENST00000356920.9">
    <molecule id="Q6S8J3-1"/>
    <property type="protein sequence ID" value="ENSP00000439189.1"/>
    <property type="gene ID" value="ENSG00000188219.16"/>
</dbReference>
<dbReference type="Ensembl" id="ENST00000358087.9">
    <molecule id="Q6S8J3-2"/>
    <property type="protein sequence ID" value="ENSP00000443049.1"/>
    <property type="gene ID" value="ENSG00000188219.16"/>
</dbReference>
<dbReference type="Ensembl" id="ENST00000514256.5">
    <molecule id="Q6S8J3-3"/>
    <property type="protein sequence ID" value="ENSP00000477649.1"/>
    <property type="gene ID" value="ENSG00000188219.16"/>
</dbReference>
<dbReference type="Ensembl" id="ENST00000626191.1">
    <molecule id="Q6S8J3-3"/>
    <property type="protein sequence ID" value="ENSP00000485683.1"/>
    <property type="gene ID" value="ENSG00000188219.16"/>
</dbReference>
<dbReference type="Ensembl" id="ENST00000683005.1">
    <molecule id="Q6S8J3-1"/>
    <property type="protein sequence ID" value="ENSP00000507284.1"/>
    <property type="gene ID" value="ENSG00000188219.16"/>
</dbReference>
<dbReference type="GeneID" id="445582"/>
<dbReference type="KEGG" id="hsa:445582"/>
<dbReference type="MANE-Select" id="ENST00000683005.1">
    <property type="protein sequence ID" value="ENSP00000507284.1"/>
    <property type="RefSeq nucleotide sequence ID" value="NM_001083538.3"/>
    <property type="RefSeq protein sequence ID" value="NP_001077007.1"/>
</dbReference>
<dbReference type="UCSC" id="uc002tsn.3">
    <molecule id="Q6S8J3-1"/>
    <property type="organism name" value="human"/>
</dbReference>
<dbReference type="AGR" id="HGNC:33895"/>
<dbReference type="CTD" id="445582"/>
<dbReference type="DisGeNET" id="445582"/>
<dbReference type="GeneCards" id="POTEE"/>
<dbReference type="HGNC" id="HGNC:33895">
    <property type="gene designation" value="POTEE"/>
</dbReference>
<dbReference type="HPA" id="ENSG00000188219">
    <property type="expression patterns" value="Tissue enriched (testis)"/>
</dbReference>
<dbReference type="MIM" id="608914">
    <property type="type" value="gene"/>
</dbReference>
<dbReference type="neXtProt" id="NX_Q6S8J3"/>
<dbReference type="OpenTargets" id="ENSG00000188219"/>
<dbReference type="PharmGKB" id="PA164724783"/>
<dbReference type="VEuPathDB" id="HostDB:ENSG00000188219"/>
<dbReference type="eggNOG" id="KOG0676">
    <property type="taxonomic scope" value="Eukaryota"/>
</dbReference>
<dbReference type="GeneTree" id="ENSGT00940000163068"/>
<dbReference type="HOGENOM" id="CLU_010163_0_0_1"/>
<dbReference type="InParanoid" id="Q6S8J3"/>
<dbReference type="OMA" id="CARNHAR"/>
<dbReference type="OrthoDB" id="9460435at2759"/>
<dbReference type="PAN-GO" id="Q6S8J3">
    <property type="GO annotations" value="0 GO annotations based on evolutionary models"/>
</dbReference>
<dbReference type="PhylomeDB" id="Q6S8J3"/>
<dbReference type="PathwayCommons" id="Q6S8J3"/>
<dbReference type="Reactome" id="R-HSA-9035034">
    <property type="pathway name" value="RHOF GTPase cycle"/>
</dbReference>
<dbReference type="SignaLink" id="Q6S8J3"/>
<dbReference type="BioGRID-ORCS" id="445582">
    <property type="hits" value="52 hits in 1037 CRISPR screens"/>
</dbReference>
<dbReference type="ChiTaRS" id="POTEE">
    <property type="organism name" value="human"/>
</dbReference>
<dbReference type="GenomeRNAi" id="445582"/>
<dbReference type="Pharos" id="Q6S8J3">
    <property type="development level" value="Tbio"/>
</dbReference>
<dbReference type="PRO" id="PR:Q6S8J3"/>
<dbReference type="Proteomes" id="UP000005640">
    <property type="component" value="Chromosome 2"/>
</dbReference>
<dbReference type="RNAct" id="Q6S8J3">
    <property type="molecule type" value="protein"/>
</dbReference>
<dbReference type="Bgee" id="ENSG00000188219">
    <property type="expression patterns" value="Expressed in male germ line stem cell (sensu Vertebrata) in testis and 11 other cell types or tissues"/>
</dbReference>
<dbReference type="ExpressionAtlas" id="Q6S8J3">
    <property type="expression patterns" value="baseline and differential"/>
</dbReference>
<dbReference type="GO" id="GO:0015629">
    <property type="term" value="C:actin cytoskeleton"/>
    <property type="evidence" value="ECO:0000318"/>
    <property type="project" value="GO_Central"/>
</dbReference>
<dbReference type="GO" id="GO:0005884">
    <property type="term" value="C:actin filament"/>
    <property type="evidence" value="ECO:0000318"/>
    <property type="project" value="GO_Central"/>
</dbReference>
<dbReference type="GO" id="GO:0030424">
    <property type="term" value="C:axon"/>
    <property type="evidence" value="ECO:0000318"/>
    <property type="project" value="GO_Central"/>
</dbReference>
<dbReference type="GO" id="GO:0072562">
    <property type="term" value="C:blood microparticle"/>
    <property type="evidence" value="ECO:0007005"/>
    <property type="project" value="UniProtKB"/>
</dbReference>
<dbReference type="GO" id="GO:0005737">
    <property type="term" value="C:cytoplasm"/>
    <property type="evidence" value="ECO:0000318"/>
    <property type="project" value="GO_Central"/>
</dbReference>
<dbReference type="GO" id="GO:0070062">
    <property type="term" value="C:extracellular exosome"/>
    <property type="evidence" value="ECO:0007005"/>
    <property type="project" value="UniProtKB"/>
</dbReference>
<dbReference type="GO" id="GO:0005615">
    <property type="term" value="C:extracellular space"/>
    <property type="evidence" value="ECO:0007005"/>
    <property type="project" value="UniProtKB"/>
</dbReference>
<dbReference type="GO" id="GO:0016020">
    <property type="term" value="C:membrane"/>
    <property type="evidence" value="ECO:0000318"/>
    <property type="project" value="GO_Central"/>
</dbReference>
<dbReference type="GO" id="GO:0035267">
    <property type="term" value="C:NuA4 histone acetyltransferase complex"/>
    <property type="evidence" value="ECO:0000318"/>
    <property type="project" value="GO_Central"/>
</dbReference>
<dbReference type="GO" id="GO:0045202">
    <property type="term" value="C:synapse"/>
    <property type="evidence" value="ECO:0000318"/>
    <property type="project" value="GO_Central"/>
</dbReference>
<dbReference type="GO" id="GO:0019901">
    <property type="term" value="F:protein kinase binding"/>
    <property type="evidence" value="ECO:0000318"/>
    <property type="project" value="GO_Central"/>
</dbReference>
<dbReference type="GO" id="GO:0098973">
    <property type="term" value="F:structural constituent of postsynaptic actin cytoskeleton"/>
    <property type="evidence" value="ECO:0000318"/>
    <property type="project" value="GO_Central"/>
</dbReference>
<dbReference type="GO" id="GO:0007409">
    <property type="term" value="P:axonogenesis"/>
    <property type="evidence" value="ECO:0000318"/>
    <property type="project" value="GO_Central"/>
</dbReference>
<dbReference type="GO" id="GO:0048870">
    <property type="term" value="P:cell motility"/>
    <property type="evidence" value="ECO:0000318"/>
    <property type="project" value="GO_Central"/>
</dbReference>
<dbReference type="GO" id="GO:0021762">
    <property type="term" value="P:substantia nigra development"/>
    <property type="evidence" value="ECO:0007007"/>
    <property type="project" value="UniProtKB"/>
</dbReference>
<dbReference type="CDD" id="cd10224">
    <property type="entry name" value="ASKHA_NBD_actin"/>
    <property type="match status" value="1"/>
</dbReference>
<dbReference type="FunFam" id="3.30.420.40:FF:000291">
    <property type="entry name" value="Actin, alpha skeletal muscle"/>
    <property type="match status" value="1"/>
</dbReference>
<dbReference type="FunFam" id="3.90.640.10:FF:000047">
    <property type="entry name" value="Actin, alpha skeletal muscle"/>
    <property type="match status" value="1"/>
</dbReference>
<dbReference type="FunFam" id="3.30.420.40:FF:000404">
    <property type="entry name" value="Major actin"/>
    <property type="match status" value="1"/>
</dbReference>
<dbReference type="FunFam" id="1.25.40.20:FF:000581">
    <property type="entry name" value="POTE ankyrin domain family member E"/>
    <property type="match status" value="1"/>
</dbReference>
<dbReference type="FunFam" id="3.30.420.40:FF:000058">
    <property type="entry name" value="Putative actin-related protein 5"/>
    <property type="match status" value="1"/>
</dbReference>
<dbReference type="Gene3D" id="3.30.420.40">
    <property type="match status" value="2"/>
</dbReference>
<dbReference type="Gene3D" id="3.90.640.10">
    <property type="entry name" value="Actin, Chain A, domain 4"/>
    <property type="match status" value="1"/>
</dbReference>
<dbReference type="Gene3D" id="1.25.40.20">
    <property type="entry name" value="Ankyrin repeat-containing domain"/>
    <property type="match status" value="1"/>
</dbReference>
<dbReference type="InterPro" id="IPR004000">
    <property type="entry name" value="Actin"/>
</dbReference>
<dbReference type="InterPro" id="IPR020902">
    <property type="entry name" value="Actin/actin-like_CS"/>
</dbReference>
<dbReference type="InterPro" id="IPR004001">
    <property type="entry name" value="Actin_CS"/>
</dbReference>
<dbReference type="InterPro" id="IPR002110">
    <property type="entry name" value="Ankyrin_rpt"/>
</dbReference>
<dbReference type="InterPro" id="IPR036770">
    <property type="entry name" value="Ankyrin_rpt-contain_sf"/>
</dbReference>
<dbReference type="InterPro" id="IPR043129">
    <property type="entry name" value="ATPase_NBD"/>
</dbReference>
<dbReference type="InterPro" id="IPR039497">
    <property type="entry name" value="CC144C-like_CC_dom"/>
</dbReference>
<dbReference type="PANTHER" id="PTHR11937">
    <property type="entry name" value="ACTIN"/>
    <property type="match status" value="1"/>
</dbReference>
<dbReference type="Pfam" id="PF00022">
    <property type="entry name" value="Actin"/>
    <property type="match status" value="1"/>
</dbReference>
<dbReference type="Pfam" id="PF12796">
    <property type="entry name" value="Ank_2"/>
    <property type="match status" value="2"/>
</dbReference>
<dbReference type="Pfam" id="PF14915">
    <property type="entry name" value="CCDC144C"/>
    <property type="match status" value="1"/>
</dbReference>
<dbReference type="PRINTS" id="PR00190">
    <property type="entry name" value="ACTIN"/>
</dbReference>
<dbReference type="SMART" id="SM00268">
    <property type="entry name" value="ACTIN"/>
    <property type="match status" value="1"/>
</dbReference>
<dbReference type="SMART" id="SM00248">
    <property type="entry name" value="ANK"/>
    <property type="match status" value="6"/>
</dbReference>
<dbReference type="SUPFAM" id="SSF53067">
    <property type="entry name" value="Actin-like ATPase domain"/>
    <property type="match status" value="2"/>
</dbReference>
<dbReference type="SUPFAM" id="SSF48403">
    <property type="entry name" value="Ankyrin repeat"/>
    <property type="match status" value="1"/>
</dbReference>
<dbReference type="PROSITE" id="PS00432">
    <property type="entry name" value="ACTINS_2"/>
    <property type="match status" value="1"/>
</dbReference>
<dbReference type="PROSITE" id="PS01132">
    <property type="entry name" value="ACTINS_ACT_LIKE"/>
    <property type="match status" value="1"/>
</dbReference>
<dbReference type="PROSITE" id="PS50297">
    <property type="entry name" value="ANK_REP_REGION"/>
    <property type="match status" value="1"/>
</dbReference>
<dbReference type="PROSITE" id="PS50088">
    <property type="entry name" value="ANK_REPEAT"/>
    <property type="match status" value="4"/>
</dbReference>
<comment type="interaction">
    <interactant intactId="EBI-4289913">
        <id>Q6S8J3</id>
    </interactant>
    <interactant intactId="EBI-16580134">
        <id>P41597</id>
        <label>CCR2</label>
    </interactant>
    <organismsDiffer>false</organismsDiffer>
    <experiments>2</experiments>
</comment>
<comment type="alternative products">
    <event type="alternative splicing"/>
    <isoform>
        <id>Q6S8J3-1</id>
        <name>1</name>
        <name>POTE2A</name>
        <sequence type="displayed"/>
    </isoform>
    <isoform>
        <id>Q6S8J3-2</id>
        <name>2</name>
        <name>POTE2B</name>
        <sequence type="described" ref="VSP_011969 VSP_011972 VSP_011973"/>
    </isoform>
    <isoform>
        <id>Q6S8J3-3</id>
        <name>3</name>
        <name>POTE2C</name>
        <name>POTE2D</name>
        <sequence type="described" ref="VSP_011970 VSP_011971"/>
    </isoform>
</comment>
<comment type="similarity">
    <text evidence="4">In the N-terminal section; belongs to the POTE family.</text>
</comment>
<comment type="similarity">
    <text evidence="4">In the C-terminal section; belongs to the actin family.</text>
</comment>
<feature type="chain" id="PRO_0000066914" description="POTE ankyrin domain family member E">
    <location>
        <begin position="1"/>
        <end position="1075"/>
    </location>
</feature>
<feature type="repeat" description="ANK 1">
    <location>
        <begin position="172"/>
        <end position="201"/>
    </location>
</feature>
<feature type="repeat" description="ANK 2">
    <location>
        <begin position="205"/>
        <end position="234"/>
    </location>
</feature>
<feature type="repeat" description="ANK 3">
    <location>
        <begin position="238"/>
        <end position="267"/>
    </location>
</feature>
<feature type="repeat" description="ANK 4">
    <location>
        <begin position="271"/>
        <end position="300"/>
    </location>
</feature>
<feature type="repeat" description="ANK 5">
    <location>
        <begin position="304"/>
        <end position="333"/>
    </location>
</feature>
<feature type="region of interest" description="Disordered" evidence="2">
    <location>
        <begin position="369"/>
        <end position="530"/>
    </location>
</feature>
<feature type="region of interest" description="Disordered" evidence="2">
    <location>
        <begin position="544"/>
        <end position="599"/>
    </location>
</feature>
<feature type="region of interest" description="Actin-like">
    <location>
        <begin position="702"/>
        <end position="1075"/>
    </location>
</feature>
<feature type="coiled-coil region" evidence="1">
    <location>
        <begin position="399"/>
        <end position="435"/>
    </location>
</feature>
<feature type="coiled-coil region" evidence="1">
    <location>
        <begin position="642"/>
        <end position="698"/>
    </location>
</feature>
<feature type="compositionally biased region" description="Basic and acidic residues" evidence="2">
    <location>
        <begin position="377"/>
        <end position="392"/>
    </location>
</feature>
<feature type="compositionally biased region" description="Basic and acidic residues" evidence="2">
    <location>
        <begin position="401"/>
        <end position="424"/>
    </location>
</feature>
<feature type="compositionally biased region" description="Basic and acidic residues" evidence="2">
    <location>
        <begin position="466"/>
        <end position="483"/>
    </location>
</feature>
<feature type="compositionally biased region" description="Polar residues" evidence="2">
    <location>
        <begin position="485"/>
        <end position="494"/>
    </location>
</feature>
<feature type="compositionally biased region" description="Basic and acidic residues" evidence="2">
    <location>
        <begin position="495"/>
        <end position="530"/>
    </location>
</feature>
<feature type="splice variant" id="VSP_011969" description="In isoform 2." evidence="3">
    <original>K</original>
    <variation>KVCSSQLYQHE</variation>
    <location>
        <position position="212"/>
    </location>
</feature>
<feature type="splice variant" id="VSP_011970" description="In isoform 3." evidence="3">
    <original>E</original>
    <variation>G</variation>
    <location>
        <position position="376"/>
    </location>
</feature>
<feature type="splice variant" id="VSP_011971" description="In isoform 3." evidence="3">
    <location>
        <begin position="377"/>
        <end position="1075"/>
    </location>
</feature>
<feature type="splice variant" id="VSP_011972" description="In isoform 2." evidence="3">
    <original>QELKLTSE</original>
    <variation>NVSRTRNK</variation>
    <location>
        <begin position="377"/>
        <end position="384"/>
    </location>
</feature>
<feature type="splice variant" id="VSP_011973" description="In isoform 2." evidence="3">
    <location>
        <begin position="385"/>
        <end position="1075"/>
    </location>
</feature>
<feature type="sequence conflict" description="In Ref. 2; AAS58867." evidence="4" ref="2">
    <original>V</original>
    <variation>G</variation>
    <location>
        <position position="346"/>
    </location>
</feature>
<feature type="sequence conflict" description="In Ref. 2; AAS58865." evidence="4" ref="2">
    <original>E</original>
    <variation>D</variation>
    <location>
        <position position="378"/>
    </location>
</feature>
<feature type="sequence conflict" description="In Ref. 2; AAS58865." evidence="4" ref="2">
    <original>G</original>
    <variation>R</variation>
    <location>
        <position position="546"/>
    </location>
</feature>
<feature type="sequence conflict" description="In Ref. 2; AAS58865." evidence="4" ref="2">
    <original>G</original>
    <variation>A</variation>
    <location>
        <position position="563"/>
    </location>
</feature>
<feature type="sequence conflict" description="In Ref. 2; AAS58865." evidence="4" ref="2">
    <original>P</original>
    <variation>L</variation>
    <location>
        <position position="578"/>
    </location>
</feature>
<sequence>MVVEVDSMPAASSVKKPFGLRSKMGKWCCRCFPCYRESGKSNVGTSGDHDDSAMKTLRSKMGKWCHHCFPCCRGSGKSNVGASGDHDDSAMKTLRNKMGKWCCHCFPCCRGSGKSKVGAWGDYDDSAFMEPRYHVRGEDLDKLHRAAWWGKVPRKDLIVMLRDTDVNKKDKQKRTALHLASANGNSEVVKLLLDRRCQLNVLDNKKRTALIKAVQCQEDECALMLLEHGTDPNIPDEYGNTTLHYAIYNEDKLMAKALLLYGADIESKNKHGLTPLLLGVHEQKQQVVKFLIKKKANLNALDRYGRTALILAVCCGSASIVSLLLEQNIDVSSQDLSGQTAREYAVSSHHHVICQLLSDYKEKQMLKISSENSNPEQELKLTSEEESQRFKGSENSQPEKMSQELEINKDGDREVEEEMKKHESNNVGLLENLTNGVTAGNGDNGLIPQRKSRTPENQQFPDNESEEYHRICELLSDYKEKQMPKYSSENSNPEQDLKLTSEEESQRLKGSENGQPEKRSQEPEINKDGDRELENFMAIEEMKKHGSTHVGFPENLTNGATAGNGDDGLIPPRKSRTPESQQFPDTENEEYHSDEQNDTQKQFCEEQNTGILHDEILIHEEKQIEVVEKMNSELSLSCKKEKDVLHENSTLREEIAMLRLELDTMKHQSQLREKKYLEDIESVKKKNDNLLKALQLNELTMDDDTAVLVIDNGSGMCKAGFAGDDAPRAVFPSIVGRPRQQGMMGGMHQKESYVGKEAQSKRGILTLKYPMEHGIITNWDDMEKIWHHTFYNELRVAPEEHPILLTEAPLNPKANREKMTQIMFETFNTPAMYVAIQAVPSLYTSGRTTGIVMDSGDGVTHTVPIYEGNALPHATLRLDLAGRELPDYLMKILTERGYRFTTMAEREIVRDIKEKLCYVALDFEQEMATAASSSSLEKSYELPDGQVITIGNERFRCPEALFQPCFLGMESCGIHETTFNSIMKSDVDIRKDLYTNTVLSGGTTMYPGMAHRMQKEIAALAPSMMKIRIIAPPKRKYSVWVGGSILASLSTFQQMWISKQEYDESGPSIVHRKCF</sequence>
<organism>
    <name type="scientific">Homo sapiens</name>
    <name type="common">Human</name>
    <dbReference type="NCBI Taxonomy" id="9606"/>
    <lineage>
        <taxon>Eukaryota</taxon>
        <taxon>Metazoa</taxon>
        <taxon>Chordata</taxon>
        <taxon>Craniata</taxon>
        <taxon>Vertebrata</taxon>
        <taxon>Euteleostomi</taxon>
        <taxon>Mammalia</taxon>
        <taxon>Eutheria</taxon>
        <taxon>Euarchontoglires</taxon>
        <taxon>Primates</taxon>
        <taxon>Haplorrhini</taxon>
        <taxon>Catarrhini</taxon>
        <taxon>Hominidae</taxon>
        <taxon>Homo</taxon>
    </lineage>
</organism>
<protein>
    <recommendedName>
        <fullName>POTE ankyrin domain family member E</fullName>
    </recommendedName>
    <alternativeName>
        <fullName>ANKRD26-like family C member 1A</fullName>
    </alternativeName>
    <alternativeName>
        <fullName>Prostate, ovary, testis-expressed protein on chromosome 2</fullName>
        <shortName>POTE-2</shortName>
    </alternativeName>
</protein>
<gene>
    <name type="primary">POTEE</name>
    <name type="synonym">A26C1A</name>
    <name type="synonym">POTE2</name>
</gene>
<proteinExistence type="evidence at protein level"/>
<keyword id="KW-0025">Alternative splicing</keyword>
<keyword id="KW-0040">ANK repeat</keyword>
<keyword id="KW-0175">Coiled coil</keyword>
<keyword id="KW-1267">Proteomics identification</keyword>
<keyword id="KW-1185">Reference proteome</keyword>
<keyword id="KW-0677">Repeat</keyword>